<name>NHAB_VIBCH</name>
<reference key="1">
    <citation type="journal article" date="2003" name="J. Bacteriol.">
        <title>Roles of NhaA, NhaB, and NhaD Na(+)/H(+) antiporters in survival of Vibrio cholerae in a saline environment.</title>
        <authorList>
            <person name="Herz K."/>
            <person name="Vimont S."/>
            <person name="Padan E."/>
            <person name="Berche P."/>
        </authorList>
    </citation>
    <scope>NUCLEOTIDE SEQUENCE [GENOMIC DNA]</scope>
    <scope>FUNCTION AS ANTIPORTER</scope>
</reference>
<reference key="2">
    <citation type="journal article" date="2000" name="Nature">
        <title>DNA sequence of both chromosomes of the cholera pathogen Vibrio cholerae.</title>
        <authorList>
            <person name="Heidelberg J.F."/>
            <person name="Eisen J.A."/>
            <person name="Nelson W.C."/>
            <person name="Clayton R.A."/>
            <person name="Gwinn M.L."/>
            <person name="Dodson R.J."/>
            <person name="Haft D.H."/>
            <person name="Hickey E.K."/>
            <person name="Peterson J.D."/>
            <person name="Umayam L.A."/>
            <person name="Gill S.R."/>
            <person name="Nelson K.E."/>
            <person name="Read T.D."/>
            <person name="Tettelin H."/>
            <person name="Richardson D.L."/>
            <person name="Ermolaeva M.D."/>
            <person name="Vamathevan J.J."/>
            <person name="Bass S."/>
            <person name="Qin H."/>
            <person name="Dragoi I."/>
            <person name="Sellers P."/>
            <person name="McDonald L.A."/>
            <person name="Utterback T.R."/>
            <person name="Fleischmann R.D."/>
            <person name="Nierman W.C."/>
            <person name="White O."/>
            <person name="Salzberg S.L."/>
            <person name="Smith H.O."/>
            <person name="Colwell R.R."/>
            <person name="Mekalanos J.J."/>
            <person name="Venter J.C."/>
            <person name="Fraser C.M."/>
        </authorList>
    </citation>
    <scope>NUCLEOTIDE SEQUENCE [LARGE SCALE GENOMIC DNA]</scope>
    <source>
        <strain>ATCC 39315 / El Tor Inaba N16961</strain>
    </source>
</reference>
<protein>
    <recommendedName>
        <fullName evidence="1 3">Na(+)/H(+) antiporter NhaB</fullName>
    </recommendedName>
    <alternativeName>
        <fullName evidence="1">Sodium/proton antiporter NhaB</fullName>
    </alternativeName>
</protein>
<organism>
    <name type="scientific">Vibrio cholerae serotype O1 (strain ATCC 39315 / El Tor Inaba N16961)</name>
    <dbReference type="NCBI Taxonomy" id="243277"/>
    <lineage>
        <taxon>Bacteria</taxon>
        <taxon>Pseudomonadati</taxon>
        <taxon>Pseudomonadota</taxon>
        <taxon>Gammaproteobacteria</taxon>
        <taxon>Vibrionales</taxon>
        <taxon>Vibrionaceae</taxon>
        <taxon>Vibrio</taxon>
    </lineage>
</organism>
<dbReference type="EMBL" id="AF489522">
    <property type="protein sequence ID" value="AAO37925.1"/>
    <property type="molecule type" value="Genomic_DNA"/>
</dbReference>
<dbReference type="EMBL" id="AE003852">
    <property type="protein sequence ID" value="AAF95049.1"/>
    <property type="molecule type" value="Genomic_DNA"/>
</dbReference>
<dbReference type="PIR" id="C82144">
    <property type="entry name" value="C82144"/>
</dbReference>
<dbReference type="RefSeq" id="NP_231535.1">
    <property type="nucleotide sequence ID" value="NC_002505.1"/>
</dbReference>
<dbReference type="RefSeq" id="WP_001132255.1">
    <property type="nucleotide sequence ID" value="NZ_LT906614.1"/>
</dbReference>
<dbReference type="SMR" id="Q9KQU7"/>
<dbReference type="STRING" id="243277.VC_1901"/>
<dbReference type="DNASU" id="2613530"/>
<dbReference type="EnsemblBacteria" id="AAF95049">
    <property type="protein sequence ID" value="AAF95049"/>
    <property type="gene ID" value="VC_1901"/>
</dbReference>
<dbReference type="GeneID" id="69719470"/>
<dbReference type="KEGG" id="vch:VC_1901"/>
<dbReference type="PATRIC" id="fig|243277.26.peg.1817"/>
<dbReference type="eggNOG" id="COG3067">
    <property type="taxonomic scope" value="Bacteria"/>
</dbReference>
<dbReference type="HOGENOM" id="CLU_041110_0_0_6"/>
<dbReference type="Proteomes" id="UP000000584">
    <property type="component" value="Chromosome 1"/>
</dbReference>
<dbReference type="GO" id="GO:0005886">
    <property type="term" value="C:plasma membrane"/>
    <property type="evidence" value="ECO:0000318"/>
    <property type="project" value="GO_Central"/>
</dbReference>
<dbReference type="GO" id="GO:0015385">
    <property type="term" value="F:sodium:proton antiporter activity"/>
    <property type="evidence" value="ECO:0000318"/>
    <property type="project" value="GO_Central"/>
</dbReference>
<dbReference type="HAMAP" id="MF_01599">
    <property type="entry name" value="NhaB"/>
    <property type="match status" value="1"/>
</dbReference>
<dbReference type="InterPro" id="IPR004671">
    <property type="entry name" value="Na+/H+_antiporter_NhaB"/>
</dbReference>
<dbReference type="NCBIfam" id="TIGR00774">
    <property type="entry name" value="NhaB"/>
    <property type="match status" value="1"/>
</dbReference>
<dbReference type="NCBIfam" id="NF007093">
    <property type="entry name" value="PRK09547.1"/>
    <property type="match status" value="1"/>
</dbReference>
<dbReference type="PANTHER" id="PTHR43302:SF1">
    <property type="entry name" value="NA(+)_H(+) ANTIPORTER NHAB"/>
    <property type="match status" value="1"/>
</dbReference>
<dbReference type="PANTHER" id="PTHR43302">
    <property type="entry name" value="TRANSPORTER ARSB-RELATED"/>
    <property type="match status" value="1"/>
</dbReference>
<dbReference type="Pfam" id="PF06450">
    <property type="entry name" value="NhaB"/>
    <property type="match status" value="1"/>
</dbReference>
<gene>
    <name evidence="1 3" type="primary">nhaB</name>
    <name type="ordered locus">VC_1901</name>
</gene>
<accession>Q9KQU7</accession>
<accession>Q7B7L0</accession>
<evidence type="ECO:0000255" key="1">
    <source>
        <dbReference type="HAMAP-Rule" id="MF_01599"/>
    </source>
</evidence>
<evidence type="ECO:0000269" key="2">
    <source>
    </source>
</evidence>
<evidence type="ECO:0000303" key="3">
    <source>
    </source>
</evidence>
<evidence type="ECO:0000305" key="4"/>
<sequence>MPMSLGNAFIKNFLGKAPDWYKVAIIAFLIINPIVFFFINPFLAGWLLVVEFIFTLAMALKCYPLQPGGLLAIEAIAIGMTSPGQVKHELVANIEVLLLLVFMVAGIYFMKQLLLFIFTKILLGIRSKVLLSIAFSVTAAFLSAFLDALTVIAVIISVAVGFYSIYHKVASGQSVHSSHDHTHDEGISELTRDDLENYRAFLRSLLMHAGVGTALGGVTTMVGEPQNLIIADQAGWQFGEFLLRMAPVTVPVFIAGMLTCMLVEKFRIFGYGARLPANVRQILLDFDSEERKNRTNQDVAKLWVQGAIAVWLIVGLALHLAAVGLIGLSVIILATAFTGVIEEHSLGKAFEEALPFTALLAVFFSIVAVIIDQELFKPVIDAVLNVEDHGTQLALFYVANGLLSMVSDNVFVGTVYITEVKTALMEGMISRDQFDLLAVAINTGTNLPSVATPNGQAAFLFLLTSALAPLIRLSYGRMVIMAFPYTLALSLVGFIGIMFLLEPMTEVFYSLGWISHHVAPAADALLQSGH</sequence>
<feature type="chain" id="PRO_0000333145" description="Na(+)/H(+) antiporter NhaB">
    <location>
        <begin position="1"/>
        <end position="530"/>
    </location>
</feature>
<feature type="transmembrane region" description="Helical" evidence="1">
    <location>
        <begin position="23"/>
        <end position="43"/>
    </location>
</feature>
<feature type="transmembrane region" description="Helical" evidence="1">
    <location>
        <begin position="45"/>
        <end position="65"/>
    </location>
</feature>
<feature type="transmembrane region" description="Helical" evidence="1">
    <location>
        <begin position="90"/>
        <end position="110"/>
    </location>
</feature>
<feature type="transmembrane region" description="Helical" evidence="1">
    <location>
        <begin position="113"/>
        <end position="133"/>
    </location>
</feature>
<feature type="transmembrane region" description="Helical" evidence="1">
    <location>
        <begin position="140"/>
        <end position="160"/>
    </location>
</feature>
<feature type="transmembrane region" description="Helical" evidence="1">
    <location>
        <begin position="205"/>
        <end position="225"/>
    </location>
</feature>
<feature type="transmembrane region" description="Helical" evidence="1">
    <location>
        <begin position="238"/>
        <end position="258"/>
    </location>
</feature>
<feature type="transmembrane region" description="Helical" evidence="1">
    <location>
        <begin position="308"/>
        <end position="328"/>
    </location>
</feature>
<feature type="transmembrane region" description="Helical" evidence="1">
    <location>
        <begin position="351"/>
        <end position="371"/>
    </location>
</feature>
<feature type="transmembrane region" description="Helical" evidence="1">
    <location>
        <begin position="451"/>
        <end position="471"/>
    </location>
</feature>
<feature type="transmembrane region" description="Helical" evidence="1">
    <location>
        <begin position="479"/>
        <end position="499"/>
    </location>
</feature>
<keyword id="KW-0050">Antiport</keyword>
<keyword id="KW-0997">Cell inner membrane</keyword>
<keyword id="KW-1003">Cell membrane</keyword>
<keyword id="KW-0406">Ion transport</keyword>
<keyword id="KW-0472">Membrane</keyword>
<keyword id="KW-1185">Reference proteome</keyword>
<keyword id="KW-0915">Sodium</keyword>
<keyword id="KW-0739">Sodium transport</keyword>
<keyword id="KW-0812">Transmembrane</keyword>
<keyword id="KW-1133">Transmembrane helix</keyword>
<keyword id="KW-0813">Transport</keyword>
<comment type="function">
    <text evidence="1 2">Na(+)/H(+) antiporter that extrudes sodium in exchange for external protons.</text>
</comment>
<comment type="catalytic activity">
    <reaction evidence="1">
        <text>2 Na(+)(in) + 3 H(+)(out) = 2 Na(+)(out) + 3 H(+)(in)</text>
        <dbReference type="Rhea" id="RHEA:29247"/>
        <dbReference type="ChEBI" id="CHEBI:15378"/>
        <dbReference type="ChEBI" id="CHEBI:29101"/>
    </reaction>
    <physiologicalReaction direction="left-to-right" evidence="1">
        <dbReference type="Rhea" id="RHEA:29248"/>
    </physiologicalReaction>
</comment>
<comment type="subcellular location">
    <subcellularLocation>
        <location evidence="1">Cell inner membrane</location>
        <topology evidence="1">Multi-pass membrane protein</topology>
    </subcellularLocation>
</comment>
<comment type="similarity">
    <text evidence="1 4">Belongs to the NhaB Na(+)/H(+) (TC 2.A.34) antiporter family.</text>
</comment>
<proteinExistence type="evidence at protein level"/>